<name>GP4_PRRSL</name>
<reference key="1">
    <citation type="journal article" date="1993" name="Virology">
        <title>Lelystad virus, the causative agent of porcine epidemic abortion and respiratory syndrome (PEARS), is related to LDV and EAV.</title>
        <authorList>
            <person name="Meulenberg J.J.M."/>
            <person name="Hulst M.M."/>
            <person name="de Meijer E.J."/>
            <person name="Moonen P.L.J.M."/>
            <person name="den Besten A."/>
            <person name="de Kluyver E.P."/>
            <person name="Wensvoort G."/>
            <person name="Moormann R.J.M."/>
        </authorList>
    </citation>
    <scope>NUCLEOTIDE SEQUENCE [GENOMIC RNA]</scope>
</reference>
<reference key="2">
    <citation type="journal article" date="1993" name="Virology">
        <title>Molecular characterization of porcine reproductive and respiratory syndrome virus, a member of the arterivirus group.</title>
        <authorList>
            <person name="Conzelmann K.K."/>
            <person name="Visser N."/>
            <person name="van Woensel P."/>
            <person name="Thiel H.J."/>
        </authorList>
    </citation>
    <scope>NUCLEOTIDE SEQUENCE [GENOMIC RNA]</scope>
    <source>
        <strain>Isolate Boxmeer 10</strain>
    </source>
</reference>
<reference key="3">
    <citation type="journal article" date="2005" name="J. Virol.">
        <title>Envelope protein requirements for the assembly of infectious virions of porcine reproductive and respiratory syndrome virus.</title>
        <authorList>
            <person name="Wissink E.H."/>
            <person name="Kroese M.V."/>
            <person name="van Wijk H.A."/>
            <person name="Rijsewijk F.A."/>
            <person name="Meulenberg J.J."/>
            <person name="Rottier P.J."/>
        </authorList>
    </citation>
    <scope>SUBCELLULAR LOCATION</scope>
    <scope>SUBUNIT</scope>
</reference>
<dbReference type="EMBL" id="M96262">
    <property type="protein sequence ID" value="AAA46277.1"/>
    <property type="molecule type" value="Genomic_RNA"/>
</dbReference>
<dbReference type="EMBL" id="L04493">
    <property type="protein sequence ID" value="AAA47104.1"/>
    <property type="molecule type" value="Genomic_RNA"/>
</dbReference>
<dbReference type="PIR" id="D45392">
    <property type="entry name" value="D45392"/>
</dbReference>
<dbReference type="PIR" id="E36861">
    <property type="entry name" value="E36861"/>
</dbReference>
<dbReference type="GlyCosmos" id="Q04568">
    <property type="glycosylation" value="4 sites, No reported glycans"/>
</dbReference>
<dbReference type="Proteomes" id="UP000006687">
    <property type="component" value="Segment"/>
</dbReference>
<dbReference type="GO" id="GO:0005576">
    <property type="term" value="C:extracellular region"/>
    <property type="evidence" value="ECO:0007669"/>
    <property type="project" value="UniProtKB-SubCell"/>
</dbReference>
<dbReference type="GO" id="GO:0044167">
    <property type="term" value="C:host cell endoplasmic reticulum membrane"/>
    <property type="evidence" value="ECO:0007669"/>
    <property type="project" value="UniProtKB-SubCell"/>
</dbReference>
<dbReference type="GO" id="GO:0044178">
    <property type="term" value="C:host cell Golgi membrane"/>
    <property type="evidence" value="ECO:0007669"/>
    <property type="project" value="UniProtKB-SubCell"/>
</dbReference>
<dbReference type="GO" id="GO:0016020">
    <property type="term" value="C:membrane"/>
    <property type="evidence" value="ECO:0007669"/>
    <property type="project" value="UniProtKB-KW"/>
</dbReference>
<dbReference type="GO" id="GO:0019031">
    <property type="term" value="C:viral envelope"/>
    <property type="evidence" value="ECO:0007669"/>
    <property type="project" value="UniProtKB-KW"/>
</dbReference>
<dbReference type="GO" id="GO:0055036">
    <property type="term" value="C:virion membrane"/>
    <property type="evidence" value="ECO:0007669"/>
    <property type="project" value="UniProtKB-SubCell"/>
</dbReference>
<dbReference type="GO" id="GO:0046718">
    <property type="term" value="P:symbiont entry into host cell"/>
    <property type="evidence" value="ECO:0007669"/>
    <property type="project" value="UniProtKB-KW"/>
</dbReference>
<dbReference type="GO" id="GO:0019062">
    <property type="term" value="P:virion attachment to host cell"/>
    <property type="evidence" value="ECO:0007669"/>
    <property type="project" value="UniProtKB-KW"/>
</dbReference>
<dbReference type="InterPro" id="IPR003412">
    <property type="entry name" value="Arteri_GP4"/>
</dbReference>
<dbReference type="Pfam" id="PF02497">
    <property type="entry name" value="Arteri_GP4"/>
    <property type="match status" value="1"/>
</dbReference>
<protein>
    <recommendedName>
        <fullName>Glycoprotein 4</fullName>
        <shortName>Protein GP4</shortName>
    </recommendedName>
</protein>
<proteinExistence type="evidence at protein level"/>
<keyword id="KW-0325">Glycoprotein</keyword>
<keyword id="KW-1038">Host endoplasmic reticulum</keyword>
<keyword id="KW-1040">Host Golgi apparatus</keyword>
<keyword id="KW-1043">Host membrane</keyword>
<keyword id="KW-0945">Host-virus interaction</keyword>
<keyword id="KW-0472">Membrane</keyword>
<keyword id="KW-1185">Reference proteome</keyword>
<keyword id="KW-0964">Secreted</keyword>
<keyword id="KW-0732">Signal</keyword>
<keyword id="KW-0812">Transmembrane</keyword>
<keyword id="KW-1133">Transmembrane helix</keyword>
<keyword id="KW-1161">Viral attachment to host cell</keyword>
<keyword id="KW-0261">Viral envelope protein</keyword>
<keyword id="KW-0946">Virion</keyword>
<keyword id="KW-1160">Virus entry into host cell</keyword>
<accession>Q04568</accession>
<feature type="signal peptide" evidence="2">
    <location>
        <begin position="1"/>
        <end position="22"/>
    </location>
</feature>
<feature type="chain" id="PRO_0000080881" description="Glycoprotein 4">
    <location>
        <begin position="23"/>
        <end position="183"/>
    </location>
</feature>
<feature type="topological domain" description="Virion surface" evidence="1">
    <location>
        <begin position="23"/>
        <end position="157"/>
    </location>
</feature>
<feature type="transmembrane region" description="Helical" evidence="2">
    <location>
        <begin position="158"/>
        <end position="177"/>
    </location>
</feature>
<feature type="topological domain" description="Intravirion" evidence="1">
    <location>
        <begin position="178"/>
        <end position="183"/>
    </location>
</feature>
<feature type="glycosylation site" description="N-linked (GlcNAc...) asparagine; by host" evidence="2">
    <location>
        <position position="37"/>
    </location>
</feature>
<feature type="glycosylation site" description="N-linked (GlcNAc...) asparagine; by host" evidence="2">
    <location>
        <position position="88"/>
    </location>
</feature>
<feature type="glycosylation site" description="N-linked (GlcNAc...) asparagine; by host" evidence="2">
    <location>
        <position position="124"/>
    </location>
</feature>
<feature type="glycosylation site" description="N-linked (GlcNAc...) asparagine; by host" evidence="2">
    <location>
        <position position="134"/>
    </location>
</feature>
<feature type="sequence conflict" description="In Ref. 2; AAA47104." evidence="4" ref="2">
    <original>F</original>
    <variation>L</variation>
    <location>
        <position position="8"/>
    </location>
</feature>
<sequence>MAAATLFFLAGAQHIMVSEAFACKPCFSTHLSDIETNTTAAAGFMVLQDINCFRPHGVSAAQEKISFGKSSQCREAVGTPQYITITANVTDESYLYNADLLMLSACLFYASEMSEKGFKVIFGNVSGVVSACVNFTDYVAHVTQHTQQHHLVIDHIRLLHFLTPSAMRWATTIACLFAILLAI</sequence>
<organism>
    <name type="scientific">Porcine reproductive and respiratory syndrome virus (strain Lelystad)</name>
    <name type="common">PRRSV</name>
    <dbReference type="NCBI Taxonomy" id="11049"/>
    <lineage>
        <taxon>Viruses</taxon>
        <taxon>Riboviria</taxon>
        <taxon>Orthornavirae</taxon>
        <taxon>Pisuviricota</taxon>
        <taxon>Pisoniviricetes</taxon>
        <taxon>Nidovirales</taxon>
        <taxon>Arnidovirineae</taxon>
        <taxon>Arteriviridae</taxon>
        <taxon>Variarterivirinae</taxon>
        <taxon>Betaarterivirus</taxon>
        <taxon>Eurpobartevirus</taxon>
        <taxon>Betaarterivirus suid 1</taxon>
    </lineage>
</organism>
<organismHost>
    <name type="scientific">Sus scrofa</name>
    <name type="common">Pig</name>
    <dbReference type="NCBI Taxonomy" id="9823"/>
</organismHost>
<comment type="function">
    <text evidence="1">Minor envelope protein. Along with GP2a, serves as the viral attachment protein responsible for mediating interactions with CD163 thereby playing a role in virus entry into susceptible host cells (By similarity).</text>
</comment>
<comment type="subunit">
    <text evidence="1 4">Heterotrimer of GP2a, GP3, and GP4 (By similarity). The GP2a-GP3-GP4 complex associates with the E protein (Probable). Interacts with glycoprotein 5 (By similarity). Interacts with host CD163; this interaction plays a role in virus entry into host cell (By similarity).</text>
</comment>
<comment type="subcellular location">
    <subcellularLocation>
        <location evidence="3">Virion membrane</location>
        <topology evidence="3">Single-pass type I membrane protein</topology>
    </subcellularLocation>
    <subcellularLocation>
        <location evidence="3">Host endoplasmic reticulum membrane</location>
        <topology evidence="3">Single-pass type I membrane protein</topology>
    </subcellularLocation>
    <subcellularLocation>
        <location evidence="3">Host Golgi apparatus membrane</location>
        <topology evidence="3">Single-pass type I membrane protein</topology>
    </subcellularLocation>
    <subcellularLocation>
        <location evidence="3">Secreted</location>
    </subcellularLocation>
    <text evidence="1">Only a small fraction of GP4 synthesized in infected cells ends up in virions.</text>
</comment>
<comment type="similarity">
    <text evidence="4">Belongs to the arteriviridae GP4 protein family.</text>
</comment>
<gene>
    <name type="primary">GP4</name>
    <name type="ORF">4</name>
</gene>
<evidence type="ECO:0000250" key="1"/>
<evidence type="ECO:0000255" key="2"/>
<evidence type="ECO:0000269" key="3">
    <source>
    </source>
</evidence>
<evidence type="ECO:0000305" key="4"/>